<gene>
    <name type="primary">opn1mw3</name>
    <name type="synonym">rh23</name>
    <name type="ORF">si:zc263a23.3</name>
</gene>
<protein>
    <recommendedName>
        <fullName>Green-sensitive opsin-3</fullName>
    </recommendedName>
    <alternativeName>
        <fullName>Green cone photoreceptor pigment 3</fullName>
    </alternativeName>
    <alternativeName>
        <fullName>Opsin RH2-3</fullName>
    </alternativeName>
    <alternativeName>
        <fullName>Opsin-1, medium-wave-sensitive 3</fullName>
    </alternativeName>
</protein>
<accession>Q8AYM7</accession>
<feature type="chain" id="PRO_0000197777" description="Green-sensitive opsin-3">
    <location>
        <begin position="1"/>
        <end position="349"/>
    </location>
</feature>
<feature type="topological domain" description="Extracellular" evidence="2">
    <location>
        <begin position="1"/>
        <end position="36"/>
    </location>
</feature>
<feature type="transmembrane region" description="Helical; Name=1" evidence="2">
    <location>
        <begin position="37"/>
        <end position="61"/>
    </location>
</feature>
<feature type="topological domain" description="Cytoplasmic" evidence="2">
    <location>
        <begin position="62"/>
        <end position="73"/>
    </location>
</feature>
<feature type="transmembrane region" description="Helical; Name=2" evidence="2">
    <location>
        <begin position="74"/>
        <end position="99"/>
    </location>
</feature>
<feature type="topological domain" description="Extracellular" evidence="2">
    <location>
        <begin position="100"/>
        <end position="113"/>
    </location>
</feature>
<feature type="transmembrane region" description="Helical; Name=3" evidence="2">
    <location>
        <begin position="114"/>
        <end position="133"/>
    </location>
</feature>
<feature type="topological domain" description="Cytoplasmic" evidence="2">
    <location>
        <begin position="134"/>
        <end position="152"/>
    </location>
</feature>
<feature type="transmembrane region" description="Helical; Name=4" evidence="2">
    <location>
        <begin position="153"/>
        <end position="176"/>
    </location>
</feature>
<feature type="topological domain" description="Extracellular" evidence="2">
    <location>
        <begin position="177"/>
        <end position="202"/>
    </location>
</feature>
<feature type="transmembrane region" description="Helical; Name=5" evidence="2">
    <location>
        <begin position="203"/>
        <end position="230"/>
    </location>
</feature>
<feature type="topological domain" description="Cytoplasmic" evidence="2">
    <location>
        <begin position="231"/>
        <end position="252"/>
    </location>
</feature>
<feature type="transmembrane region" description="Helical; Name=6" evidence="2">
    <location>
        <begin position="253"/>
        <end position="276"/>
    </location>
</feature>
<feature type="topological domain" description="Extracellular" evidence="2">
    <location>
        <begin position="277"/>
        <end position="284"/>
    </location>
</feature>
<feature type="transmembrane region" description="Helical; Name=7" evidence="2">
    <location>
        <begin position="285"/>
        <end position="309"/>
    </location>
</feature>
<feature type="topological domain" description="Cytoplasmic" evidence="2">
    <location>
        <begin position="310"/>
        <end position="349"/>
    </location>
</feature>
<feature type="region of interest" description="Disordered" evidence="4">
    <location>
        <begin position="329"/>
        <end position="349"/>
    </location>
</feature>
<feature type="compositionally biased region" description="Low complexity" evidence="4">
    <location>
        <begin position="334"/>
        <end position="349"/>
    </location>
</feature>
<feature type="modified residue" description="N6-(retinylidene)lysine" evidence="1">
    <location>
        <position position="296"/>
    </location>
</feature>
<feature type="glycosylation site" description="N-linked (GlcNAc...) asparagine" evidence="2">
    <location>
        <position position="2"/>
    </location>
</feature>
<feature type="glycosylation site" description="N-linked (GlcNAc...) asparagine" evidence="2">
    <location>
        <position position="15"/>
    </location>
</feature>
<feature type="glycosylation site" description="N-linked (GlcNAc...) asparagine" evidence="2">
    <location>
        <position position="200"/>
    </location>
</feature>
<feature type="disulfide bond" evidence="3">
    <location>
        <begin position="110"/>
        <end position="187"/>
    </location>
</feature>
<feature type="sequence conflict" description="In Ref. 1; mRNA." evidence="6" ref="1">
    <original>S</original>
    <variation>A</variation>
    <location>
        <position position="166"/>
    </location>
</feature>
<feature type="sequence conflict" description="In Ref. 1; mRNA." evidence="6" ref="1">
    <original>V</original>
    <variation>F</variation>
    <location>
        <position position="173"/>
    </location>
</feature>
<comment type="function">
    <text>Visual pigments are the light-absorbing molecules that mediate vision. They consist of an apoprotein, opsin, covalently linked to cis-retinal.</text>
</comment>
<comment type="biophysicochemical properties">
    <absorption>
        <max evidence="5">488 nm</max>
    </absorption>
</comment>
<comment type="subcellular location">
    <subcellularLocation>
        <location>Membrane</location>
        <topology>Multi-pass membrane protein</topology>
    </subcellularLocation>
</comment>
<comment type="PTM">
    <text evidence="1">Phosphorylated on some or all of the serine and threonine residues present in the C-terminal region.</text>
</comment>
<comment type="similarity">
    <text evidence="3">Belongs to the G-protein coupled receptor 1 family. Opsin subfamily.</text>
</comment>
<dbReference type="EMBL" id="AB087807">
    <property type="protein sequence ID" value="BAC24131.1"/>
    <property type="molecule type" value="Genomic_DNA"/>
</dbReference>
<dbReference type="EMBL" id="AL732567">
    <property type="protein sequence ID" value="CAD87810.1"/>
    <property type="molecule type" value="Genomic_DNA"/>
</dbReference>
<dbReference type="EMBL" id="BC075989">
    <property type="protein sequence ID" value="AAH75989.1"/>
    <property type="molecule type" value="mRNA"/>
</dbReference>
<dbReference type="RefSeq" id="NP_878312.1">
    <property type="nucleotide sequence ID" value="NM_182892.2"/>
</dbReference>
<dbReference type="SMR" id="Q8AYM7"/>
<dbReference type="FunCoup" id="Q8AYM7">
    <property type="interactions" value="45"/>
</dbReference>
<dbReference type="STRING" id="7955.ENSDARP00000001943"/>
<dbReference type="GlyCosmos" id="Q8AYM7">
    <property type="glycosylation" value="3 sites, No reported glycans"/>
</dbReference>
<dbReference type="PaxDb" id="7955-ENSDARP00000001943"/>
<dbReference type="Ensembl" id="ENSDART00000000877">
    <property type="protein sequence ID" value="ENSDARP00000001943"/>
    <property type="gene ID" value="ENSDARG00000044279"/>
</dbReference>
<dbReference type="GeneID" id="360152"/>
<dbReference type="KEGG" id="dre:360152"/>
<dbReference type="AGR" id="ZFIN:ZDB-GENE-030728-6"/>
<dbReference type="CTD" id="101060233"/>
<dbReference type="ZFIN" id="ZDB-GENE-030728-6">
    <property type="gene designation" value="opn1mw3"/>
</dbReference>
<dbReference type="eggNOG" id="KOG3656">
    <property type="taxonomic scope" value="Eukaryota"/>
</dbReference>
<dbReference type="HOGENOM" id="CLU_009579_3_0_1"/>
<dbReference type="InParanoid" id="Q8AYM7"/>
<dbReference type="OMA" id="CFPVFTI"/>
<dbReference type="OrthoDB" id="5962323at2759"/>
<dbReference type="PhylomeDB" id="Q8AYM7"/>
<dbReference type="TreeFam" id="TF324998"/>
<dbReference type="PRO" id="PR:Q8AYM7"/>
<dbReference type="Proteomes" id="UP000000437">
    <property type="component" value="Chromosome 6"/>
</dbReference>
<dbReference type="Bgee" id="ENSDARG00000044279">
    <property type="expression patterns" value="Expressed in head and 7 other cell types or tissues"/>
</dbReference>
<dbReference type="GO" id="GO:0001750">
    <property type="term" value="C:photoreceptor outer segment"/>
    <property type="evidence" value="ECO:0000318"/>
    <property type="project" value="GO_Central"/>
</dbReference>
<dbReference type="GO" id="GO:0005886">
    <property type="term" value="C:plasma membrane"/>
    <property type="evidence" value="ECO:0000318"/>
    <property type="project" value="GO_Central"/>
</dbReference>
<dbReference type="GO" id="GO:0008020">
    <property type="term" value="F:G protein-coupled photoreceptor activity"/>
    <property type="evidence" value="ECO:0000318"/>
    <property type="project" value="GO_Central"/>
</dbReference>
<dbReference type="GO" id="GO:0071482">
    <property type="term" value="P:cellular response to light stimulus"/>
    <property type="evidence" value="ECO:0000318"/>
    <property type="project" value="GO_Central"/>
</dbReference>
<dbReference type="GO" id="GO:0007186">
    <property type="term" value="P:G protein-coupled receptor signaling pathway"/>
    <property type="evidence" value="ECO:0000318"/>
    <property type="project" value="GO_Central"/>
</dbReference>
<dbReference type="GO" id="GO:0007602">
    <property type="term" value="P:phototransduction"/>
    <property type="evidence" value="ECO:0000318"/>
    <property type="project" value="GO_Central"/>
</dbReference>
<dbReference type="GO" id="GO:0007601">
    <property type="term" value="P:visual perception"/>
    <property type="evidence" value="ECO:0007669"/>
    <property type="project" value="UniProtKB-KW"/>
</dbReference>
<dbReference type="FunFam" id="1.20.1070.10:FF:000018">
    <property type="entry name" value="Rhodopsin"/>
    <property type="match status" value="1"/>
</dbReference>
<dbReference type="Gene3D" id="1.20.1070.10">
    <property type="entry name" value="Rhodopsin 7-helix transmembrane proteins"/>
    <property type="match status" value="1"/>
</dbReference>
<dbReference type="InterPro" id="IPR050125">
    <property type="entry name" value="GPCR_opsins"/>
</dbReference>
<dbReference type="InterPro" id="IPR000276">
    <property type="entry name" value="GPCR_Rhodpsn"/>
</dbReference>
<dbReference type="InterPro" id="IPR017452">
    <property type="entry name" value="GPCR_Rhodpsn_7TM"/>
</dbReference>
<dbReference type="InterPro" id="IPR001760">
    <property type="entry name" value="Opsin"/>
</dbReference>
<dbReference type="InterPro" id="IPR027430">
    <property type="entry name" value="Retinal_BS"/>
</dbReference>
<dbReference type="InterPro" id="IPR000732">
    <property type="entry name" value="Rhodopsin"/>
</dbReference>
<dbReference type="InterPro" id="IPR019477">
    <property type="entry name" value="Rhodopsin_N"/>
</dbReference>
<dbReference type="PANTHER" id="PTHR24240">
    <property type="entry name" value="OPSIN"/>
    <property type="match status" value="1"/>
</dbReference>
<dbReference type="Pfam" id="PF00001">
    <property type="entry name" value="7tm_1"/>
    <property type="match status" value="1"/>
</dbReference>
<dbReference type="Pfam" id="PF10413">
    <property type="entry name" value="Rhodopsin_N"/>
    <property type="match status" value="1"/>
</dbReference>
<dbReference type="PRINTS" id="PR00237">
    <property type="entry name" value="GPCRRHODOPSN"/>
</dbReference>
<dbReference type="PRINTS" id="PR00238">
    <property type="entry name" value="OPSIN"/>
</dbReference>
<dbReference type="PRINTS" id="PR00579">
    <property type="entry name" value="RHODOPSIN"/>
</dbReference>
<dbReference type="SUPFAM" id="SSF81321">
    <property type="entry name" value="Family A G protein-coupled receptor-like"/>
    <property type="match status" value="1"/>
</dbReference>
<dbReference type="PROSITE" id="PS00237">
    <property type="entry name" value="G_PROTEIN_RECEP_F1_1"/>
    <property type="match status" value="1"/>
</dbReference>
<dbReference type="PROSITE" id="PS50262">
    <property type="entry name" value="G_PROTEIN_RECEP_F1_2"/>
    <property type="match status" value="1"/>
</dbReference>
<dbReference type="PROSITE" id="PS00238">
    <property type="entry name" value="OPSIN"/>
    <property type="match status" value="1"/>
</dbReference>
<evidence type="ECO:0000250" key="1"/>
<evidence type="ECO:0000255" key="2"/>
<evidence type="ECO:0000255" key="3">
    <source>
        <dbReference type="PROSITE-ProRule" id="PRU00521"/>
    </source>
</evidence>
<evidence type="ECO:0000256" key="4">
    <source>
        <dbReference type="SAM" id="MobiDB-lite"/>
    </source>
</evidence>
<evidence type="ECO:0000269" key="5">
    <source>
    </source>
</evidence>
<evidence type="ECO:0000305" key="6"/>
<reference key="1">
    <citation type="journal article" date="2003" name="Genetics">
        <title>Gene duplication and spectral diversification of cone visual pigments of zebrafish.</title>
        <authorList>
            <person name="Chinen A."/>
            <person name="Hamaoka T."/>
            <person name="Yamada Y."/>
            <person name="Kawamura S."/>
        </authorList>
    </citation>
    <scope>NUCLEOTIDE SEQUENCE [GENOMIC DNA / MRNA]</scope>
    <scope>BIOPHYSICOCHEMICAL PROPERTIES</scope>
    <source>
        <strain>AB</strain>
        <tissue>Eye</tissue>
    </source>
</reference>
<reference key="2">
    <citation type="journal article" date="2013" name="Nature">
        <title>The zebrafish reference genome sequence and its relationship to the human genome.</title>
        <authorList>
            <person name="Howe K."/>
            <person name="Clark M.D."/>
            <person name="Torroja C.F."/>
            <person name="Torrance J."/>
            <person name="Berthelot C."/>
            <person name="Muffato M."/>
            <person name="Collins J.E."/>
            <person name="Humphray S."/>
            <person name="McLaren K."/>
            <person name="Matthews L."/>
            <person name="McLaren S."/>
            <person name="Sealy I."/>
            <person name="Caccamo M."/>
            <person name="Churcher C."/>
            <person name="Scott C."/>
            <person name="Barrett J.C."/>
            <person name="Koch R."/>
            <person name="Rauch G.J."/>
            <person name="White S."/>
            <person name="Chow W."/>
            <person name="Kilian B."/>
            <person name="Quintais L.T."/>
            <person name="Guerra-Assuncao J.A."/>
            <person name="Zhou Y."/>
            <person name="Gu Y."/>
            <person name="Yen J."/>
            <person name="Vogel J.H."/>
            <person name="Eyre T."/>
            <person name="Redmond S."/>
            <person name="Banerjee R."/>
            <person name="Chi J."/>
            <person name="Fu B."/>
            <person name="Langley E."/>
            <person name="Maguire S.F."/>
            <person name="Laird G.K."/>
            <person name="Lloyd D."/>
            <person name="Kenyon E."/>
            <person name="Donaldson S."/>
            <person name="Sehra H."/>
            <person name="Almeida-King J."/>
            <person name="Loveland J."/>
            <person name="Trevanion S."/>
            <person name="Jones M."/>
            <person name="Quail M."/>
            <person name="Willey D."/>
            <person name="Hunt A."/>
            <person name="Burton J."/>
            <person name="Sims S."/>
            <person name="McLay K."/>
            <person name="Plumb B."/>
            <person name="Davis J."/>
            <person name="Clee C."/>
            <person name="Oliver K."/>
            <person name="Clark R."/>
            <person name="Riddle C."/>
            <person name="Elliot D."/>
            <person name="Threadgold G."/>
            <person name="Harden G."/>
            <person name="Ware D."/>
            <person name="Begum S."/>
            <person name="Mortimore B."/>
            <person name="Kerry G."/>
            <person name="Heath P."/>
            <person name="Phillimore B."/>
            <person name="Tracey A."/>
            <person name="Corby N."/>
            <person name="Dunn M."/>
            <person name="Johnson C."/>
            <person name="Wood J."/>
            <person name="Clark S."/>
            <person name="Pelan S."/>
            <person name="Griffiths G."/>
            <person name="Smith M."/>
            <person name="Glithero R."/>
            <person name="Howden P."/>
            <person name="Barker N."/>
            <person name="Lloyd C."/>
            <person name="Stevens C."/>
            <person name="Harley J."/>
            <person name="Holt K."/>
            <person name="Panagiotidis G."/>
            <person name="Lovell J."/>
            <person name="Beasley H."/>
            <person name="Henderson C."/>
            <person name="Gordon D."/>
            <person name="Auger K."/>
            <person name="Wright D."/>
            <person name="Collins J."/>
            <person name="Raisen C."/>
            <person name="Dyer L."/>
            <person name="Leung K."/>
            <person name="Robertson L."/>
            <person name="Ambridge K."/>
            <person name="Leongamornlert D."/>
            <person name="McGuire S."/>
            <person name="Gilderthorp R."/>
            <person name="Griffiths C."/>
            <person name="Manthravadi D."/>
            <person name="Nichol S."/>
            <person name="Barker G."/>
            <person name="Whitehead S."/>
            <person name="Kay M."/>
            <person name="Brown J."/>
            <person name="Murnane C."/>
            <person name="Gray E."/>
            <person name="Humphries M."/>
            <person name="Sycamore N."/>
            <person name="Barker D."/>
            <person name="Saunders D."/>
            <person name="Wallis J."/>
            <person name="Babbage A."/>
            <person name="Hammond S."/>
            <person name="Mashreghi-Mohammadi M."/>
            <person name="Barr L."/>
            <person name="Martin S."/>
            <person name="Wray P."/>
            <person name="Ellington A."/>
            <person name="Matthews N."/>
            <person name="Ellwood M."/>
            <person name="Woodmansey R."/>
            <person name="Clark G."/>
            <person name="Cooper J."/>
            <person name="Tromans A."/>
            <person name="Grafham D."/>
            <person name="Skuce C."/>
            <person name="Pandian R."/>
            <person name="Andrews R."/>
            <person name="Harrison E."/>
            <person name="Kimberley A."/>
            <person name="Garnett J."/>
            <person name="Fosker N."/>
            <person name="Hall R."/>
            <person name="Garner P."/>
            <person name="Kelly D."/>
            <person name="Bird C."/>
            <person name="Palmer S."/>
            <person name="Gehring I."/>
            <person name="Berger A."/>
            <person name="Dooley C.M."/>
            <person name="Ersan-Urun Z."/>
            <person name="Eser C."/>
            <person name="Geiger H."/>
            <person name="Geisler M."/>
            <person name="Karotki L."/>
            <person name="Kirn A."/>
            <person name="Konantz J."/>
            <person name="Konantz M."/>
            <person name="Oberlander M."/>
            <person name="Rudolph-Geiger S."/>
            <person name="Teucke M."/>
            <person name="Lanz C."/>
            <person name="Raddatz G."/>
            <person name="Osoegawa K."/>
            <person name="Zhu B."/>
            <person name="Rapp A."/>
            <person name="Widaa S."/>
            <person name="Langford C."/>
            <person name="Yang F."/>
            <person name="Schuster S.C."/>
            <person name="Carter N.P."/>
            <person name="Harrow J."/>
            <person name="Ning Z."/>
            <person name="Herrero J."/>
            <person name="Searle S.M."/>
            <person name="Enright A."/>
            <person name="Geisler R."/>
            <person name="Plasterk R.H."/>
            <person name="Lee C."/>
            <person name="Westerfield M."/>
            <person name="de Jong P.J."/>
            <person name="Zon L.I."/>
            <person name="Postlethwait J.H."/>
            <person name="Nusslein-Volhard C."/>
            <person name="Hubbard T.J."/>
            <person name="Roest Crollius H."/>
            <person name="Rogers J."/>
            <person name="Stemple D.L."/>
        </authorList>
    </citation>
    <scope>NUCLEOTIDE SEQUENCE [LARGE SCALE GENOMIC DNA]</scope>
    <source>
        <strain>Tuebingen</strain>
    </source>
</reference>
<reference key="3">
    <citation type="submission" date="2004-07" db="EMBL/GenBank/DDBJ databases">
        <authorList>
            <consortium name="NIH - Zebrafish Gene Collection (ZGC) project"/>
        </authorList>
    </citation>
    <scope>NUCLEOTIDE SEQUENCE [LARGE SCALE MRNA]</scope>
</reference>
<sequence length="349" mass="38882">MNGTEGNNFYIPMSNRTGLVRSPYEYPQYYLAEPWQFKLLAVYMFFLMCFGFPINGLTLVVTAQHKKLRQPLNFILVNLAVAGTIMVCFGFTVTFYTAINGYFVLGPTGCAIEGFMATLGGQISLWSLVVLAIERYIVVCKPMGSFKFSSNHAFAGIGFTWIMALSCAAPPLVGWSRYIPEGMQCSCGPDYYTLNPDYNNESYVLYMFCCHFIFPVTTIFFTYGRLVCTVKAAAAQQQESESTQKAEREVTRMVILMVLGFLVAWTPYASVAAWIFFNRGAAFSAQFMAVPAFFSKSSSIFNPIIYVLLNKQFRNCMLTTLFCGKNPLGDDESSTVSTSKTEVSSVSPA</sequence>
<organism>
    <name type="scientific">Danio rerio</name>
    <name type="common">Zebrafish</name>
    <name type="synonym">Brachydanio rerio</name>
    <dbReference type="NCBI Taxonomy" id="7955"/>
    <lineage>
        <taxon>Eukaryota</taxon>
        <taxon>Metazoa</taxon>
        <taxon>Chordata</taxon>
        <taxon>Craniata</taxon>
        <taxon>Vertebrata</taxon>
        <taxon>Euteleostomi</taxon>
        <taxon>Actinopterygii</taxon>
        <taxon>Neopterygii</taxon>
        <taxon>Teleostei</taxon>
        <taxon>Ostariophysi</taxon>
        <taxon>Cypriniformes</taxon>
        <taxon>Danionidae</taxon>
        <taxon>Danioninae</taxon>
        <taxon>Danio</taxon>
    </lineage>
</organism>
<proteinExistence type="evidence at protein level"/>
<keyword id="KW-0157">Chromophore</keyword>
<keyword id="KW-1015">Disulfide bond</keyword>
<keyword id="KW-0297">G-protein coupled receptor</keyword>
<keyword id="KW-0325">Glycoprotein</keyword>
<keyword id="KW-0472">Membrane</keyword>
<keyword id="KW-0597">Phosphoprotein</keyword>
<keyword id="KW-0600">Photoreceptor protein</keyword>
<keyword id="KW-0675">Receptor</keyword>
<keyword id="KW-1185">Reference proteome</keyword>
<keyword id="KW-0681">Retinal protein</keyword>
<keyword id="KW-0716">Sensory transduction</keyword>
<keyword id="KW-0807">Transducer</keyword>
<keyword id="KW-0812">Transmembrane</keyword>
<keyword id="KW-1133">Transmembrane helix</keyword>
<keyword id="KW-0844">Vision</keyword>
<name>OPSG3_DANRE</name>